<accession>P0CK17</accession>
<keyword id="KW-0025">Alternative splicing</keyword>
<keyword id="KW-0053">Apoptosis</keyword>
<keyword id="KW-1043">Host membrane</keyword>
<keyword id="KW-1045">Host mitochondrion</keyword>
<keyword id="KW-1046">Host mitochondrion inner membrane</keyword>
<keyword id="KW-1048">Host nucleus</keyword>
<keyword id="KW-0472">Membrane</keyword>
<keyword id="KW-1185">Reference proteome</keyword>
<keyword id="KW-0678">Repressor</keyword>
<keyword id="KW-0804">Transcription</keyword>
<keyword id="KW-0805">Transcription regulation</keyword>
<feature type="chain" id="PRO_0000409222" description="Accessory protein p30II">
    <location>
        <begin position="1"/>
        <end position="241"/>
    </location>
</feature>
<feature type="region of interest" description="Disordered" evidence="3">
    <location>
        <begin position="86"/>
        <end position="153"/>
    </location>
</feature>
<feature type="short sequence motif" description="Nuclear localization signal 1" evidence="2">
    <location>
        <begin position="73"/>
        <end position="78"/>
    </location>
</feature>
<feature type="short sequence motif" description="Nuclear localization signal 2" evidence="2">
    <location>
        <begin position="91"/>
        <end position="98"/>
    </location>
</feature>
<feature type="short sequence motif" description="Mitochondrial targeting signal" evidence="1">
    <location>
        <begin position="175"/>
        <end position="184"/>
    </location>
</feature>
<feature type="compositionally biased region" description="Low complexity" evidence="3">
    <location>
        <begin position="107"/>
        <end position="138"/>
    </location>
</feature>
<feature type="splice variant" id="VSP_041273" description="In isoform p13II." evidence="4">
    <location>
        <begin position="1"/>
        <end position="154"/>
    </location>
</feature>
<organism>
    <name type="scientific">Human T-cell leukemia virus 1 (isolate Caribbea HS-35 subtype A)</name>
    <name type="common">HTLV-1</name>
    <dbReference type="NCBI Taxonomy" id="11927"/>
    <lineage>
        <taxon>Viruses</taxon>
        <taxon>Riboviria</taxon>
        <taxon>Pararnavirae</taxon>
        <taxon>Artverviricota</taxon>
        <taxon>Revtraviricetes</taxon>
        <taxon>Ortervirales</taxon>
        <taxon>Retroviridae</taxon>
        <taxon>Orthoretrovirinae</taxon>
        <taxon>Deltaretrovirus</taxon>
        <taxon>Primate T-lymphotropic virus 1</taxon>
    </lineage>
</organism>
<reference key="1">
    <citation type="journal article" date="1988" name="J. Gen. Virol.">
        <title>Molecular cloning and complete nucleotide sequence of an adult T cell leukaemia virus/human T cell leukaemia virus type I (ATLV/HTLV-I) isolate of Caribbean origin: relationship to other members of the ATLV/HTLV-I subgroup.</title>
        <authorList>
            <person name="Malik K.T.A."/>
            <person name="Even J."/>
            <person name="Karpas A."/>
        </authorList>
    </citation>
    <scope>NUCLEOTIDE SEQUENCE [GENOMIC DNA]</scope>
</reference>
<reference key="2">
    <citation type="submission" date="1997-11" db="EMBL/GenBank/DDBJ databases">
        <authorList>
            <person name="Chappey C."/>
        </authorList>
    </citation>
    <scope>NUCLEOTIDE SEQUENCE [GENOMIC DNA]</scope>
</reference>
<dbReference type="EMBL" id="D13784">
    <property type="status" value="NOT_ANNOTATED_CDS"/>
    <property type="molecule type" value="Genomic_DNA"/>
</dbReference>
<dbReference type="EMBL" id="AF033817">
    <property type="status" value="NOT_ANNOTATED_CDS"/>
    <property type="molecule type" value="Genomic_DNA"/>
</dbReference>
<dbReference type="Proteomes" id="UP000001061">
    <property type="component" value="Segment"/>
</dbReference>
<dbReference type="Proteomes" id="UP000110593">
    <property type="component" value="Genome"/>
</dbReference>
<dbReference type="GO" id="GO:0044192">
    <property type="term" value="C:host cell mitochondrial inner membrane"/>
    <property type="evidence" value="ECO:0007669"/>
    <property type="project" value="UniProtKB-SubCell"/>
</dbReference>
<dbReference type="GO" id="GO:0044196">
    <property type="term" value="C:host cell nucleolus"/>
    <property type="evidence" value="ECO:0007669"/>
    <property type="project" value="UniProtKB-SubCell"/>
</dbReference>
<dbReference type="GO" id="GO:0016020">
    <property type="term" value="C:membrane"/>
    <property type="evidence" value="ECO:0007669"/>
    <property type="project" value="UniProtKB-KW"/>
</dbReference>
<dbReference type="InterPro" id="IPR008596">
    <property type="entry name" value="P30II"/>
</dbReference>
<dbReference type="Pfam" id="PF05599">
    <property type="entry name" value="Deltaretro_Tax"/>
    <property type="match status" value="1"/>
</dbReference>
<protein>
    <recommendedName>
        <fullName>Accessory protein p30II</fullName>
    </recommendedName>
</protein>
<name>P30II_HTL1C</name>
<organismHost>
    <name type="scientific">Homo sapiens</name>
    <name type="common">Human</name>
    <dbReference type="NCBI Taxonomy" id="9606"/>
</organismHost>
<sequence length="241" mass="26837">MALCCFAFSAPCLHLRSRRSCSSCFLRAKSAAFSSARFLRRAFSSSFLFKYSAICFSSSFSRSFFRFLFSSARRCRSRCVSPRGGAFPPGGPRRSRPRLSSSRDSKPSSTVSSSSLSFNSSSKDNSPSTNSSTSRSSGHGTGKHRNSPTDTKLTMLIISPLPRVWTESSFRIPSLRVWRLCTRRLVPHLWGTMFGPPTSSRPTGHLSRASDHLGPHRWTRYRLSSTVPYPSTPLLPHPENL</sequence>
<evidence type="ECO:0000250" key="1"/>
<evidence type="ECO:0000255" key="2"/>
<evidence type="ECO:0000256" key="3">
    <source>
        <dbReference type="SAM" id="MobiDB-lite"/>
    </source>
</evidence>
<evidence type="ECO:0000305" key="4"/>
<proteinExistence type="inferred from homology"/>
<comment type="function">
    <text evidence="1">p30II is a multifunctional regulator that sequesters EP300/CREBBP and down-regulates CREB-responsive element (CRE) and Tax-responsive element (TRE) mediated transcription. Specifically binds and represses tax/rex mRNA nuclear export. Since Tax and Rex are positive regulators of viral gene expression, their inhibition by p30II reduces virion production, and allows the virus to escape the host immune surveillance and persist latently in an immune-competent host (By similarity).</text>
</comment>
<comment type="function">
    <text evidence="1">p13II increases mitochondrial permeability to monovalent cations, producing a rapid, membrane potential-dependent influx of potassium. This could involve a channel-forming activity. Interferes with cell proliferation and transformation and promotes apoptosis induced by ceramide and Fas ligand, probably using the Ras signaling (By similarity).</text>
</comment>
<comment type="subunit">
    <text evidence="1">p30II binds to the KIX domains of CREBBP and EP300.</text>
</comment>
<comment type="subcellular location">
    <molecule>Isoform p30II</molecule>
    <subcellularLocation>
        <location evidence="1">Host nucleus</location>
        <location evidence="1">Host nucleolus</location>
    </subcellularLocation>
</comment>
<comment type="subcellular location">
    <molecule>Isoform p13II</molecule>
    <subcellularLocation>
        <location evidence="1">Host mitochondrion inner membrane</location>
    </subcellularLocation>
</comment>
<comment type="alternative products">
    <event type="alternative splicing"/>
    <isoform>
        <id>P0CK17-1</id>
        <name>p30II</name>
        <sequence type="displayed"/>
    </isoform>
    <isoform>
        <id>P0CK17-2</id>
        <name>p13II</name>
        <sequence type="described" ref="VSP_041273"/>
    </isoform>
</comment>
<comment type="miscellaneous">
    <text>HTLV-1 lineages are divided in four clades, A (Cosmopolitan), B (Central African group), C (Melanesian group) and D (New Central African group).</text>
</comment>
<comment type="similarity">
    <text evidence="4">Belongs to the HTLV-1 accessory protein p30II family.</text>
</comment>